<protein>
    <recommendedName>
        <fullName evidence="1">Homoserine kinase</fullName>
        <shortName evidence="1">HK</shortName>
        <shortName evidence="1">HSK</shortName>
        <ecNumber evidence="1">2.7.1.39</ecNumber>
    </recommendedName>
</protein>
<organism>
    <name type="scientific">Buchnera aphidicola subsp. Acyrthosiphon pisum (strain Tuc7)</name>
    <dbReference type="NCBI Taxonomy" id="561501"/>
    <lineage>
        <taxon>Bacteria</taxon>
        <taxon>Pseudomonadati</taxon>
        <taxon>Pseudomonadota</taxon>
        <taxon>Gammaproteobacteria</taxon>
        <taxon>Enterobacterales</taxon>
        <taxon>Erwiniaceae</taxon>
        <taxon>Buchnera</taxon>
    </lineage>
</organism>
<feature type="chain" id="PRO_1000134243" description="Homoserine kinase">
    <location>
        <begin position="1"/>
        <end position="309"/>
    </location>
</feature>
<feature type="binding site" evidence="1">
    <location>
        <begin position="91"/>
        <end position="101"/>
    </location>
    <ligand>
        <name>ATP</name>
        <dbReference type="ChEBI" id="CHEBI:30616"/>
    </ligand>
</feature>
<reference key="1">
    <citation type="journal article" date="2009" name="Science">
        <title>The dynamics and time scale of ongoing genomic erosion in symbiotic bacteria.</title>
        <authorList>
            <person name="Moran N.A."/>
            <person name="McLaughlin H.J."/>
            <person name="Sorek R."/>
        </authorList>
    </citation>
    <scope>NUCLEOTIDE SEQUENCE [LARGE SCALE GENOMIC DNA]</scope>
    <source>
        <strain>Tuc7</strain>
    </source>
</reference>
<comment type="function">
    <text evidence="1">Catalyzes the ATP-dependent phosphorylation of L-homoserine to L-homoserine phosphate.</text>
</comment>
<comment type="catalytic activity">
    <reaction evidence="1">
        <text>L-homoserine + ATP = O-phospho-L-homoserine + ADP + H(+)</text>
        <dbReference type="Rhea" id="RHEA:13985"/>
        <dbReference type="ChEBI" id="CHEBI:15378"/>
        <dbReference type="ChEBI" id="CHEBI:30616"/>
        <dbReference type="ChEBI" id="CHEBI:57476"/>
        <dbReference type="ChEBI" id="CHEBI:57590"/>
        <dbReference type="ChEBI" id="CHEBI:456216"/>
        <dbReference type="EC" id="2.7.1.39"/>
    </reaction>
</comment>
<comment type="pathway">
    <text evidence="1">Amino-acid biosynthesis; L-threonine biosynthesis; L-threonine from L-aspartate: step 4/5.</text>
</comment>
<comment type="subcellular location">
    <subcellularLocation>
        <location evidence="1">Cytoplasm</location>
    </subcellularLocation>
</comment>
<comment type="similarity">
    <text evidence="1">Belongs to the GHMP kinase family. Homoserine kinase subfamily.</text>
</comment>
<keyword id="KW-0028">Amino-acid biosynthesis</keyword>
<keyword id="KW-0067">ATP-binding</keyword>
<keyword id="KW-0963">Cytoplasm</keyword>
<keyword id="KW-0418">Kinase</keyword>
<keyword id="KW-0547">Nucleotide-binding</keyword>
<keyword id="KW-0791">Threonine biosynthesis</keyword>
<keyword id="KW-0808">Transferase</keyword>
<evidence type="ECO:0000255" key="1">
    <source>
        <dbReference type="HAMAP-Rule" id="MF_00384"/>
    </source>
</evidence>
<dbReference type="EC" id="2.7.1.39" evidence="1"/>
<dbReference type="EMBL" id="CP001158">
    <property type="protein sequence ID" value="ACL30012.1"/>
    <property type="molecule type" value="Genomic_DNA"/>
</dbReference>
<dbReference type="RefSeq" id="WP_009874150.1">
    <property type="nucleotide sequence ID" value="NC_011834.1"/>
</dbReference>
<dbReference type="SMR" id="B8D797"/>
<dbReference type="KEGG" id="bau:BUAPTUC7_192"/>
<dbReference type="HOGENOM" id="CLU_041243_1_1_6"/>
<dbReference type="UniPathway" id="UPA00050">
    <property type="reaction ID" value="UER00064"/>
</dbReference>
<dbReference type="GO" id="GO:0005737">
    <property type="term" value="C:cytoplasm"/>
    <property type="evidence" value="ECO:0007669"/>
    <property type="project" value="UniProtKB-SubCell"/>
</dbReference>
<dbReference type="GO" id="GO:0005524">
    <property type="term" value="F:ATP binding"/>
    <property type="evidence" value="ECO:0007669"/>
    <property type="project" value="UniProtKB-UniRule"/>
</dbReference>
<dbReference type="GO" id="GO:0004413">
    <property type="term" value="F:homoserine kinase activity"/>
    <property type="evidence" value="ECO:0007669"/>
    <property type="project" value="UniProtKB-UniRule"/>
</dbReference>
<dbReference type="GO" id="GO:0009088">
    <property type="term" value="P:threonine biosynthetic process"/>
    <property type="evidence" value="ECO:0007669"/>
    <property type="project" value="UniProtKB-UniRule"/>
</dbReference>
<dbReference type="Gene3D" id="3.30.230.10">
    <property type="match status" value="1"/>
</dbReference>
<dbReference type="Gene3D" id="3.30.70.890">
    <property type="entry name" value="GHMP kinase, C-terminal domain"/>
    <property type="match status" value="1"/>
</dbReference>
<dbReference type="HAMAP" id="MF_00384">
    <property type="entry name" value="Homoser_kinase"/>
    <property type="match status" value="1"/>
</dbReference>
<dbReference type="InterPro" id="IPR013750">
    <property type="entry name" value="GHMP_kinase_C_dom"/>
</dbReference>
<dbReference type="InterPro" id="IPR036554">
    <property type="entry name" value="GHMP_kinase_C_sf"/>
</dbReference>
<dbReference type="InterPro" id="IPR006204">
    <property type="entry name" value="GHMP_kinase_N_dom"/>
</dbReference>
<dbReference type="InterPro" id="IPR006203">
    <property type="entry name" value="GHMP_knse_ATP-bd_CS"/>
</dbReference>
<dbReference type="InterPro" id="IPR000870">
    <property type="entry name" value="Homoserine_kinase"/>
</dbReference>
<dbReference type="InterPro" id="IPR020568">
    <property type="entry name" value="Ribosomal_Su5_D2-typ_SF"/>
</dbReference>
<dbReference type="InterPro" id="IPR014721">
    <property type="entry name" value="Ribsml_uS5_D2-typ_fold_subgr"/>
</dbReference>
<dbReference type="NCBIfam" id="NF002288">
    <property type="entry name" value="PRK01212.1-4"/>
    <property type="match status" value="1"/>
</dbReference>
<dbReference type="NCBIfam" id="TIGR00191">
    <property type="entry name" value="thrB"/>
    <property type="match status" value="1"/>
</dbReference>
<dbReference type="PANTHER" id="PTHR20861:SF1">
    <property type="entry name" value="HOMOSERINE KINASE"/>
    <property type="match status" value="1"/>
</dbReference>
<dbReference type="PANTHER" id="PTHR20861">
    <property type="entry name" value="HOMOSERINE/4-DIPHOSPHOCYTIDYL-2-C-METHYL-D-ERYTHRITOL KINASE"/>
    <property type="match status" value="1"/>
</dbReference>
<dbReference type="Pfam" id="PF08544">
    <property type="entry name" value="GHMP_kinases_C"/>
    <property type="match status" value="1"/>
</dbReference>
<dbReference type="Pfam" id="PF00288">
    <property type="entry name" value="GHMP_kinases_N"/>
    <property type="match status" value="1"/>
</dbReference>
<dbReference type="PIRSF" id="PIRSF000676">
    <property type="entry name" value="Homoser_kin"/>
    <property type="match status" value="1"/>
</dbReference>
<dbReference type="PRINTS" id="PR00958">
    <property type="entry name" value="HOMSERKINASE"/>
</dbReference>
<dbReference type="SUPFAM" id="SSF55060">
    <property type="entry name" value="GHMP Kinase, C-terminal domain"/>
    <property type="match status" value="1"/>
</dbReference>
<dbReference type="SUPFAM" id="SSF54211">
    <property type="entry name" value="Ribosomal protein S5 domain 2-like"/>
    <property type="match status" value="1"/>
</dbReference>
<dbReference type="PROSITE" id="PS00627">
    <property type="entry name" value="GHMP_KINASES_ATP"/>
    <property type="match status" value="1"/>
</dbReference>
<gene>
    <name evidence="1" type="primary">thrB</name>
    <name type="ordered locus">BUAPTUC7_192</name>
</gene>
<name>KHSE_BUCAT</name>
<sequence length="309" mass="34105">MIKIYAPASIGNVGVGFDILGAAIIPINGSLLGDFVTVKLSNKFNLVNKGIFSNKLPKNTEQNIVWKCWLKFCNTIKRNIPVSIILEKNMPIGSGLGSSACSIVATLVAMNEFCDKPLNSKELLLLMGEVEGEISGSIHYDNVAPCYLGGLQLILEDSKIISQTIPNFKNWFWIVAWPGTKVPTAEARDILPKKYKKETCIKNSRYLAGFIHASYSQQPHLAARLMQDFIAEPYRIKLLPNYLYVKEKIKKIGAISSGISGSGPTIFSISDNINTAQKISAWLTENYLQNTTGFVHICFLDSKGVRKIG</sequence>
<proteinExistence type="inferred from homology"/>
<accession>B8D797</accession>